<reference key="1">
    <citation type="submission" date="2008-05" db="EMBL/GenBank/DDBJ databases">
        <title>Complete sequence of chromosome of Geobacter lovleyi SZ.</title>
        <authorList>
            <consortium name="US DOE Joint Genome Institute"/>
            <person name="Lucas S."/>
            <person name="Copeland A."/>
            <person name="Lapidus A."/>
            <person name="Glavina del Rio T."/>
            <person name="Dalin E."/>
            <person name="Tice H."/>
            <person name="Bruce D."/>
            <person name="Goodwin L."/>
            <person name="Pitluck S."/>
            <person name="Chertkov O."/>
            <person name="Meincke L."/>
            <person name="Brettin T."/>
            <person name="Detter J.C."/>
            <person name="Han C."/>
            <person name="Tapia R."/>
            <person name="Kuske C.R."/>
            <person name="Schmutz J."/>
            <person name="Larimer F."/>
            <person name="Land M."/>
            <person name="Hauser L."/>
            <person name="Kyrpides N."/>
            <person name="Mikhailova N."/>
            <person name="Sung Y."/>
            <person name="Fletcher K.E."/>
            <person name="Ritalahti K.M."/>
            <person name="Loeffler F.E."/>
            <person name="Richardson P."/>
        </authorList>
    </citation>
    <scope>NUCLEOTIDE SEQUENCE [LARGE SCALE GENOMIC DNA]</scope>
    <source>
        <strain>ATCC BAA-1151 / DSM 17278 / SZ</strain>
    </source>
</reference>
<name>RBFA_TRIL1</name>
<keyword id="KW-0963">Cytoplasm</keyword>
<keyword id="KW-1185">Reference proteome</keyword>
<keyword id="KW-0690">Ribosome biogenesis</keyword>
<accession>B3EAE8</accession>
<proteinExistence type="inferred from homology"/>
<feature type="chain" id="PRO_1000201634" description="Ribosome-binding factor A">
    <location>
        <begin position="1"/>
        <end position="123"/>
    </location>
</feature>
<gene>
    <name evidence="1" type="primary">rbfA</name>
    <name type="ordered locus">Glov_1670</name>
</gene>
<dbReference type="EMBL" id="CP001089">
    <property type="protein sequence ID" value="ACD95386.1"/>
    <property type="molecule type" value="Genomic_DNA"/>
</dbReference>
<dbReference type="RefSeq" id="WP_012469728.1">
    <property type="nucleotide sequence ID" value="NC_010814.1"/>
</dbReference>
<dbReference type="SMR" id="B3EAE8"/>
<dbReference type="STRING" id="398767.Glov_1670"/>
<dbReference type="KEGG" id="glo:Glov_1670"/>
<dbReference type="eggNOG" id="COG0858">
    <property type="taxonomic scope" value="Bacteria"/>
</dbReference>
<dbReference type="HOGENOM" id="CLU_089475_6_3_7"/>
<dbReference type="OrthoDB" id="307788at2"/>
<dbReference type="Proteomes" id="UP000002420">
    <property type="component" value="Chromosome"/>
</dbReference>
<dbReference type="GO" id="GO:0005829">
    <property type="term" value="C:cytosol"/>
    <property type="evidence" value="ECO:0007669"/>
    <property type="project" value="TreeGrafter"/>
</dbReference>
<dbReference type="GO" id="GO:0043024">
    <property type="term" value="F:ribosomal small subunit binding"/>
    <property type="evidence" value="ECO:0007669"/>
    <property type="project" value="TreeGrafter"/>
</dbReference>
<dbReference type="GO" id="GO:0030490">
    <property type="term" value="P:maturation of SSU-rRNA"/>
    <property type="evidence" value="ECO:0007669"/>
    <property type="project" value="UniProtKB-UniRule"/>
</dbReference>
<dbReference type="Gene3D" id="3.30.300.20">
    <property type="match status" value="1"/>
</dbReference>
<dbReference type="HAMAP" id="MF_00003">
    <property type="entry name" value="RbfA"/>
    <property type="match status" value="1"/>
</dbReference>
<dbReference type="InterPro" id="IPR015946">
    <property type="entry name" value="KH_dom-like_a/b"/>
</dbReference>
<dbReference type="InterPro" id="IPR000238">
    <property type="entry name" value="RbfA"/>
</dbReference>
<dbReference type="InterPro" id="IPR023799">
    <property type="entry name" value="RbfA_dom_sf"/>
</dbReference>
<dbReference type="InterPro" id="IPR020053">
    <property type="entry name" value="Ribosome-bd_factorA_CS"/>
</dbReference>
<dbReference type="NCBIfam" id="NF010388">
    <property type="entry name" value="PRK13815.1"/>
    <property type="match status" value="1"/>
</dbReference>
<dbReference type="NCBIfam" id="TIGR00082">
    <property type="entry name" value="rbfA"/>
    <property type="match status" value="1"/>
</dbReference>
<dbReference type="PANTHER" id="PTHR33515">
    <property type="entry name" value="RIBOSOME-BINDING FACTOR A, CHLOROPLASTIC-RELATED"/>
    <property type="match status" value="1"/>
</dbReference>
<dbReference type="PANTHER" id="PTHR33515:SF1">
    <property type="entry name" value="RIBOSOME-BINDING FACTOR A, CHLOROPLASTIC-RELATED"/>
    <property type="match status" value="1"/>
</dbReference>
<dbReference type="Pfam" id="PF02033">
    <property type="entry name" value="RBFA"/>
    <property type="match status" value="1"/>
</dbReference>
<dbReference type="SUPFAM" id="SSF89919">
    <property type="entry name" value="Ribosome-binding factor A, RbfA"/>
    <property type="match status" value="1"/>
</dbReference>
<dbReference type="PROSITE" id="PS01319">
    <property type="entry name" value="RBFA"/>
    <property type="match status" value="1"/>
</dbReference>
<evidence type="ECO:0000255" key="1">
    <source>
        <dbReference type="HAMAP-Rule" id="MF_00003"/>
    </source>
</evidence>
<comment type="function">
    <text evidence="1">One of several proteins that assist in the late maturation steps of the functional core of the 30S ribosomal subunit. Associates with free 30S ribosomal subunits (but not with 30S subunits that are part of 70S ribosomes or polysomes). Required for efficient processing of 16S rRNA. May interact with the 5'-terminal helix region of 16S rRNA.</text>
</comment>
<comment type="subunit">
    <text evidence="1">Monomer. Binds 30S ribosomal subunits, but not 50S ribosomal subunits or 70S ribosomes.</text>
</comment>
<comment type="subcellular location">
    <subcellularLocation>
        <location evidence="1">Cytoplasm</location>
    </subcellularLocation>
</comment>
<comment type="similarity">
    <text evidence="1">Belongs to the RbfA family.</text>
</comment>
<protein>
    <recommendedName>
        <fullName evidence="1">Ribosome-binding factor A</fullName>
    </recommendedName>
</protein>
<sequence>MKHKRSDKVAETIHTTISTILSRGLNDPRIGFVTITGVEVTDDLHLARIFFTVIGDEAAKKSSEAGLNSAARFIRHELGKVLKMRYTPDILFKYDHSQEYGQRIDDLLREVGTGNDGNDSEDR</sequence>
<organism>
    <name type="scientific">Trichlorobacter lovleyi (strain ATCC BAA-1151 / DSM 17278 / SZ)</name>
    <name type="common">Geobacter lovleyi</name>
    <dbReference type="NCBI Taxonomy" id="398767"/>
    <lineage>
        <taxon>Bacteria</taxon>
        <taxon>Pseudomonadati</taxon>
        <taxon>Thermodesulfobacteriota</taxon>
        <taxon>Desulfuromonadia</taxon>
        <taxon>Geobacterales</taxon>
        <taxon>Geobacteraceae</taxon>
        <taxon>Trichlorobacter</taxon>
    </lineage>
</organism>